<reference key="1">
    <citation type="journal article" date="2009" name="PLoS Genet.">
        <title>Organised genome dynamics in the Escherichia coli species results in highly diverse adaptive paths.</title>
        <authorList>
            <person name="Touchon M."/>
            <person name="Hoede C."/>
            <person name="Tenaillon O."/>
            <person name="Barbe V."/>
            <person name="Baeriswyl S."/>
            <person name="Bidet P."/>
            <person name="Bingen E."/>
            <person name="Bonacorsi S."/>
            <person name="Bouchier C."/>
            <person name="Bouvet O."/>
            <person name="Calteau A."/>
            <person name="Chiapello H."/>
            <person name="Clermont O."/>
            <person name="Cruveiller S."/>
            <person name="Danchin A."/>
            <person name="Diard M."/>
            <person name="Dossat C."/>
            <person name="Karoui M.E."/>
            <person name="Frapy E."/>
            <person name="Garry L."/>
            <person name="Ghigo J.M."/>
            <person name="Gilles A.M."/>
            <person name="Johnson J."/>
            <person name="Le Bouguenec C."/>
            <person name="Lescat M."/>
            <person name="Mangenot S."/>
            <person name="Martinez-Jehanne V."/>
            <person name="Matic I."/>
            <person name="Nassif X."/>
            <person name="Oztas S."/>
            <person name="Petit M.A."/>
            <person name="Pichon C."/>
            <person name="Rouy Z."/>
            <person name="Ruf C.S."/>
            <person name="Schneider D."/>
            <person name="Tourret J."/>
            <person name="Vacherie B."/>
            <person name="Vallenet D."/>
            <person name="Medigue C."/>
            <person name="Rocha E.P.C."/>
            <person name="Denamur E."/>
        </authorList>
    </citation>
    <scope>NUCLEOTIDE SEQUENCE [LARGE SCALE GENOMIC DNA]</scope>
    <source>
        <strain>S88 / ExPEC</strain>
    </source>
</reference>
<name>TORD_ECO45</name>
<evidence type="ECO:0000255" key="1">
    <source>
        <dbReference type="HAMAP-Rule" id="MF_01150"/>
    </source>
</evidence>
<dbReference type="EMBL" id="CU928161">
    <property type="protein sequence ID" value="CAR02344.1"/>
    <property type="molecule type" value="Genomic_DNA"/>
</dbReference>
<dbReference type="RefSeq" id="WP_000210216.1">
    <property type="nucleotide sequence ID" value="NC_011742.1"/>
</dbReference>
<dbReference type="SMR" id="B7MIE4"/>
<dbReference type="KEGG" id="ecz:ECS88_1013"/>
<dbReference type="HOGENOM" id="CLU_077650_4_0_6"/>
<dbReference type="Proteomes" id="UP000000747">
    <property type="component" value="Chromosome"/>
</dbReference>
<dbReference type="GO" id="GO:0005737">
    <property type="term" value="C:cytoplasm"/>
    <property type="evidence" value="ECO:0007669"/>
    <property type="project" value="UniProtKB-SubCell"/>
</dbReference>
<dbReference type="GO" id="GO:0051259">
    <property type="term" value="P:protein complex oligomerization"/>
    <property type="evidence" value="ECO:0007669"/>
    <property type="project" value="InterPro"/>
</dbReference>
<dbReference type="GO" id="GO:0006457">
    <property type="term" value="P:protein folding"/>
    <property type="evidence" value="ECO:0007669"/>
    <property type="project" value="UniProtKB-UniRule"/>
</dbReference>
<dbReference type="FunFam" id="1.20.120.1820:FF:000001">
    <property type="entry name" value="Chaperone protein TorD"/>
    <property type="match status" value="1"/>
</dbReference>
<dbReference type="FunFam" id="1.20.1280.20:FF:000003">
    <property type="entry name" value="Chaperone protein TorD"/>
    <property type="match status" value="1"/>
</dbReference>
<dbReference type="Gene3D" id="1.20.120.1820">
    <property type="match status" value="1"/>
</dbReference>
<dbReference type="Gene3D" id="1.20.1280.20">
    <property type="entry name" value="HscB, C-terminal domain"/>
    <property type="match status" value="1"/>
</dbReference>
<dbReference type="HAMAP" id="MF_01150">
    <property type="entry name" value="TorD"/>
    <property type="match status" value="1"/>
</dbReference>
<dbReference type="InterPro" id="IPR023069">
    <property type="entry name" value="Chaperone_TorD"/>
</dbReference>
<dbReference type="InterPro" id="IPR020945">
    <property type="entry name" value="DMSO/NO3_reduct_chaperone"/>
</dbReference>
<dbReference type="InterPro" id="IPR036386">
    <property type="entry name" value="HscB_C_sf"/>
</dbReference>
<dbReference type="InterPro" id="IPR036411">
    <property type="entry name" value="TorD-like_sf"/>
</dbReference>
<dbReference type="InterPro" id="IPR050289">
    <property type="entry name" value="TorD/DmsD_chaperones"/>
</dbReference>
<dbReference type="NCBIfam" id="NF003442">
    <property type="entry name" value="PRK04976.1"/>
    <property type="match status" value="1"/>
</dbReference>
<dbReference type="PANTHER" id="PTHR34227:SF11">
    <property type="entry name" value="CHAPERONE PROTEIN TORD"/>
    <property type="match status" value="1"/>
</dbReference>
<dbReference type="PANTHER" id="PTHR34227">
    <property type="entry name" value="CHAPERONE PROTEIN YCDY"/>
    <property type="match status" value="1"/>
</dbReference>
<dbReference type="Pfam" id="PF02613">
    <property type="entry name" value="Nitrate_red_del"/>
    <property type="match status" value="1"/>
</dbReference>
<dbReference type="SUPFAM" id="SSF89155">
    <property type="entry name" value="TorD-like"/>
    <property type="match status" value="1"/>
</dbReference>
<keyword id="KW-0143">Chaperone</keyword>
<keyword id="KW-0963">Cytoplasm</keyword>
<keyword id="KW-1185">Reference proteome</keyword>
<feature type="chain" id="PRO_1000137503" description="Chaperone protein TorD">
    <location>
        <begin position="1"/>
        <end position="199"/>
    </location>
</feature>
<comment type="function">
    <text evidence="1">Involved in the biogenesis of TorA. Acts on TorA before the insertion of the molybdenum cofactor and, as a result, probably favors a conformation of the apoenzyme that is competent for acquiring the cofactor.</text>
</comment>
<comment type="subcellular location">
    <subcellularLocation>
        <location evidence="1">Cytoplasm</location>
    </subcellularLocation>
</comment>
<comment type="similarity">
    <text evidence="1">Belongs to the TorD/DmsD family. TorD subfamily.</text>
</comment>
<gene>
    <name evidence="1" type="primary">torD</name>
    <name type="ordered locus">ECS88_1013</name>
</gene>
<accession>B7MIE4</accession>
<organism>
    <name type="scientific">Escherichia coli O45:K1 (strain S88 / ExPEC)</name>
    <dbReference type="NCBI Taxonomy" id="585035"/>
    <lineage>
        <taxon>Bacteria</taxon>
        <taxon>Pseudomonadati</taxon>
        <taxon>Pseudomonadota</taxon>
        <taxon>Gammaproteobacteria</taxon>
        <taxon>Enterobacterales</taxon>
        <taxon>Enterobacteriaceae</taxon>
        <taxon>Escherichia</taxon>
    </lineage>
</organism>
<proteinExistence type="inferred from homology"/>
<protein>
    <recommendedName>
        <fullName evidence="1">Chaperone protein TorD</fullName>
    </recommendedName>
</protein>
<sequence>MTTLTVQQIACVYAWLAQLFSRELDDEQLTQIASAQMAEWFSLLKSEPPLTAAVNGLENSIATLTVRDDARLELAADFCGLFLMTDKQAALPYASAYKQDEQEIKRLLVEAGMETSGNFNEPADHLAIYLELLSHLHFSLGEGTVPARRIDGLRQKTLTALREWLPEFAARCRQYDSFGFYAALSQLLLVLVECDYQKR</sequence>